<comment type="function">
    <text evidence="1">Transmembrane glycoprotein that functions as both a receptor and an adhesion molecule playing a crucial role in cell adhesion, motility, migration and invasion. Extracellular domain enables binding to extracellular matrix proteins, such as laminin, integrin and other ligands while its intracellular domain interacts with cytoskeletal proteins like hemoglobin, facilitating cell signal transduction. Serves as a receptor for laminin alpha-5/LAMA5 to promote cell adhesion. Mechanistically, JAK2 induces BCAM phosphorylation and activates its adhesion to laminin by stimulating a Rap1/AKT signaling pathway in the absence of EPOR.</text>
</comment>
<comment type="subunit">
    <text evidence="1">Homodimer. Interacts with ITGA4:ITGB1. Interacts with spectrins SPTA1 and SPTB1.</text>
</comment>
<comment type="subcellular location">
    <subcellularLocation>
        <location evidence="1">Cell membrane</location>
        <topology evidence="1">Single-pass type I membrane protein</topology>
    </subcellularLocation>
</comment>
<comment type="PTM">
    <text evidence="1">Epinephrine-stimulated phosphorylation of Ser-615 by PKA enhances adhesion to laminin. Ser-615 can also be phosphorylated by AKT1.</text>
</comment>
<evidence type="ECO:0000250" key="1">
    <source>
        <dbReference type="UniProtKB" id="P50895"/>
    </source>
</evidence>
<evidence type="ECO:0000255" key="2"/>
<evidence type="ECO:0000255" key="3">
    <source>
        <dbReference type="PROSITE-ProRule" id="PRU00114"/>
    </source>
</evidence>
<evidence type="ECO:0000256" key="4">
    <source>
        <dbReference type="SAM" id="MobiDB-lite"/>
    </source>
</evidence>
<evidence type="ECO:0000305" key="5"/>
<accession>Q9R069</accession>
<accession>Q9ESS5</accession>
<accession>Q9JKB2</accession>
<gene>
    <name type="primary">Bcam</name>
    <name type="synonym">Gplu</name>
    <name type="synonym">Lu</name>
</gene>
<name>BCAM_MOUSE</name>
<organism>
    <name type="scientific">Mus musculus</name>
    <name type="common">Mouse</name>
    <dbReference type="NCBI Taxonomy" id="10090"/>
    <lineage>
        <taxon>Eukaryota</taxon>
        <taxon>Metazoa</taxon>
        <taxon>Chordata</taxon>
        <taxon>Craniata</taxon>
        <taxon>Vertebrata</taxon>
        <taxon>Euteleostomi</taxon>
        <taxon>Mammalia</taxon>
        <taxon>Eutheria</taxon>
        <taxon>Euarchontoglires</taxon>
        <taxon>Glires</taxon>
        <taxon>Rodentia</taxon>
        <taxon>Myomorpha</taxon>
        <taxon>Muroidea</taxon>
        <taxon>Muridae</taxon>
        <taxon>Murinae</taxon>
        <taxon>Mus</taxon>
        <taxon>Mus</taxon>
    </lineage>
</organism>
<protein>
    <recommendedName>
        <fullName>Basal cell adhesion molecule</fullName>
    </recommendedName>
    <alternativeName>
        <fullName>B-CAM cell surface glycoprotein</fullName>
    </alternativeName>
    <alternativeName>
        <fullName>Lutheran antigen</fullName>
    </alternativeName>
    <cdAntigenName>CD239</cdAntigenName>
</protein>
<proteinExistence type="evidence at protein level"/>
<reference key="1">
    <citation type="journal article" date="1999" name="Immunogenetics">
        <title>Characterization of a mouse laminin receptor gene homologous to the human blood group Lutheran gene.</title>
        <authorList>
            <person name="Rahuel C."/>
            <person name="Colin Y."/>
            <person name="Goossens D."/>
            <person name="Gane P."/>
            <person name="El Nemer W."/>
            <person name="Cartron J.-P."/>
            <person name="Le Van Kim C."/>
        </authorList>
    </citation>
    <scope>NUCLEOTIDE SEQUENCE [MRNA]</scope>
</reference>
<reference key="2">
    <citation type="journal article" date="2001" name="Dev. Dyn.">
        <title>Localization of Lutheran, a novel laminin receptor, in normal, knockout, and transgenic mice suggests an interaction with laminin alpha5 in vivo.</title>
        <authorList>
            <person name="Moulson C.L."/>
            <person name="Li C."/>
            <person name="Miner J.H."/>
        </authorList>
    </citation>
    <scope>NUCLEOTIDE SEQUENCE [MRNA]</scope>
</reference>
<reference key="3">
    <citation type="submission" date="1999-12" db="EMBL/GenBank/DDBJ databases">
        <title>Mouse Lutheran antigen.</title>
        <authorList>
            <person name="Taira E."/>
            <person name="Okumura S."/>
            <person name="Miki N."/>
        </authorList>
    </citation>
    <scope>NUCLEOTIDE SEQUENCE [MRNA]</scope>
    <source>
        <strain>BALB/cJ</strain>
    </source>
</reference>
<reference key="4">
    <citation type="submission" date="2000-01" db="EMBL/GenBank/DDBJ databases">
        <title>Mouse Lutheran glycoprotein.</title>
        <authorList>
            <person name="Parsons S.F."/>
            <person name="Lee G."/>
            <person name="Chasis J.A."/>
            <person name="Tanner M.J.A."/>
            <person name="Anstee D.J."/>
        </authorList>
    </citation>
    <scope>NUCLEOTIDE SEQUENCE [MRNA]</scope>
</reference>
<reference key="5">
    <citation type="submission" date="2000-03" db="EMBL/GenBank/DDBJ databases">
        <title>Mouse Lutheran glycoprotein gene.</title>
        <authorList>
            <person name="Lee G."/>
            <person name="Willig T.-N."/>
            <person name="Parsons S.F."/>
            <person name="Anstee D.J."/>
            <person name="Mohandas N."/>
            <person name="Chasis J.A."/>
        </authorList>
    </citation>
    <scope>NUCLEOTIDE SEQUENCE [GENOMIC DNA]</scope>
    <source>
        <strain>129/Sv</strain>
    </source>
</reference>
<reference key="6">
    <citation type="journal article" date="2005" name="Science">
        <title>The transcriptional landscape of the mammalian genome.</title>
        <authorList>
            <person name="Carninci P."/>
            <person name="Kasukawa T."/>
            <person name="Katayama S."/>
            <person name="Gough J."/>
            <person name="Frith M.C."/>
            <person name="Maeda N."/>
            <person name="Oyama R."/>
            <person name="Ravasi T."/>
            <person name="Lenhard B."/>
            <person name="Wells C."/>
            <person name="Kodzius R."/>
            <person name="Shimokawa K."/>
            <person name="Bajic V.B."/>
            <person name="Brenner S.E."/>
            <person name="Batalov S."/>
            <person name="Forrest A.R."/>
            <person name="Zavolan M."/>
            <person name="Davis M.J."/>
            <person name="Wilming L.G."/>
            <person name="Aidinis V."/>
            <person name="Allen J.E."/>
            <person name="Ambesi-Impiombato A."/>
            <person name="Apweiler R."/>
            <person name="Aturaliya R.N."/>
            <person name="Bailey T.L."/>
            <person name="Bansal M."/>
            <person name="Baxter L."/>
            <person name="Beisel K.W."/>
            <person name="Bersano T."/>
            <person name="Bono H."/>
            <person name="Chalk A.M."/>
            <person name="Chiu K.P."/>
            <person name="Choudhary V."/>
            <person name="Christoffels A."/>
            <person name="Clutterbuck D.R."/>
            <person name="Crowe M.L."/>
            <person name="Dalla E."/>
            <person name="Dalrymple B.P."/>
            <person name="de Bono B."/>
            <person name="Della Gatta G."/>
            <person name="di Bernardo D."/>
            <person name="Down T."/>
            <person name="Engstrom P."/>
            <person name="Fagiolini M."/>
            <person name="Faulkner G."/>
            <person name="Fletcher C.F."/>
            <person name="Fukushima T."/>
            <person name="Furuno M."/>
            <person name="Futaki S."/>
            <person name="Gariboldi M."/>
            <person name="Georgii-Hemming P."/>
            <person name="Gingeras T.R."/>
            <person name="Gojobori T."/>
            <person name="Green R.E."/>
            <person name="Gustincich S."/>
            <person name="Harbers M."/>
            <person name="Hayashi Y."/>
            <person name="Hensch T.K."/>
            <person name="Hirokawa N."/>
            <person name="Hill D."/>
            <person name="Huminiecki L."/>
            <person name="Iacono M."/>
            <person name="Ikeo K."/>
            <person name="Iwama A."/>
            <person name="Ishikawa T."/>
            <person name="Jakt M."/>
            <person name="Kanapin A."/>
            <person name="Katoh M."/>
            <person name="Kawasawa Y."/>
            <person name="Kelso J."/>
            <person name="Kitamura H."/>
            <person name="Kitano H."/>
            <person name="Kollias G."/>
            <person name="Krishnan S.P."/>
            <person name="Kruger A."/>
            <person name="Kummerfeld S.K."/>
            <person name="Kurochkin I.V."/>
            <person name="Lareau L.F."/>
            <person name="Lazarevic D."/>
            <person name="Lipovich L."/>
            <person name="Liu J."/>
            <person name="Liuni S."/>
            <person name="McWilliam S."/>
            <person name="Madan Babu M."/>
            <person name="Madera M."/>
            <person name="Marchionni L."/>
            <person name="Matsuda H."/>
            <person name="Matsuzawa S."/>
            <person name="Miki H."/>
            <person name="Mignone F."/>
            <person name="Miyake S."/>
            <person name="Morris K."/>
            <person name="Mottagui-Tabar S."/>
            <person name="Mulder N."/>
            <person name="Nakano N."/>
            <person name="Nakauchi H."/>
            <person name="Ng P."/>
            <person name="Nilsson R."/>
            <person name="Nishiguchi S."/>
            <person name="Nishikawa S."/>
            <person name="Nori F."/>
            <person name="Ohara O."/>
            <person name="Okazaki Y."/>
            <person name="Orlando V."/>
            <person name="Pang K.C."/>
            <person name="Pavan W.J."/>
            <person name="Pavesi G."/>
            <person name="Pesole G."/>
            <person name="Petrovsky N."/>
            <person name="Piazza S."/>
            <person name="Reed J."/>
            <person name="Reid J.F."/>
            <person name="Ring B.Z."/>
            <person name="Ringwald M."/>
            <person name="Rost B."/>
            <person name="Ruan Y."/>
            <person name="Salzberg S.L."/>
            <person name="Sandelin A."/>
            <person name="Schneider C."/>
            <person name="Schoenbach C."/>
            <person name="Sekiguchi K."/>
            <person name="Semple C.A."/>
            <person name="Seno S."/>
            <person name="Sessa L."/>
            <person name="Sheng Y."/>
            <person name="Shibata Y."/>
            <person name="Shimada H."/>
            <person name="Shimada K."/>
            <person name="Silva D."/>
            <person name="Sinclair B."/>
            <person name="Sperling S."/>
            <person name="Stupka E."/>
            <person name="Sugiura K."/>
            <person name="Sultana R."/>
            <person name="Takenaka Y."/>
            <person name="Taki K."/>
            <person name="Tammoja K."/>
            <person name="Tan S.L."/>
            <person name="Tang S."/>
            <person name="Taylor M.S."/>
            <person name="Tegner J."/>
            <person name="Teichmann S.A."/>
            <person name="Ueda H.R."/>
            <person name="van Nimwegen E."/>
            <person name="Verardo R."/>
            <person name="Wei C.L."/>
            <person name="Yagi K."/>
            <person name="Yamanishi H."/>
            <person name="Zabarovsky E."/>
            <person name="Zhu S."/>
            <person name="Zimmer A."/>
            <person name="Hide W."/>
            <person name="Bult C."/>
            <person name="Grimmond S.M."/>
            <person name="Teasdale R.D."/>
            <person name="Liu E.T."/>
            <person name="Brusic V."/>
            <person name="Quackenbush J."/>
            <person name="Wahlestedt C."/>
            <person name="Mattick J.S."/>
            <person name="Hume D.A."/>
            <person name="Kai C."/>
            <person name="Sasaki D."/>
            <person name="Tomaru Y."/>
            <person name="Fukuda S."/>
            <person name="Kanamori-Katayama M."/>
            <person name="Suzuki M."/>
            <person name="Aoki J."/>
            <person name="Arakawa T."/>
            <person name="Iida J."/>
            <person name="Imamura K."/>
            <person name="Itoh M."/>
            <person name="Kato T."/>
            <person name="Kawaji H."/>
            <person name="Kawagashira N."/>
            <person name="Kawashima T."/>
            <person name="Kojima M."/>
            <person name="Kondo S."/>
            <person name="Konno H."/>
            <person name="Nakano K."/>
            <person name="Ninomiya N."/>
            <person name="Nishio T."/>
            <person name="Okada M."/>
            <person name="Plessy C."/>
            <person name="Shibata K."/>
            <person name="Shiraki T."/>
            <person name="Suzuki S."/>
            <person name="Tagami M."/>
            <person name="Waki K."/>
            <person name="Watahiki A."/>
            <person name="Okamura-Oho Y."/>
            <person name="Suzuki H."/>
            <person name="Kawai J."/>
            <person name="Hayashizaki Y."/>
        </authorList>
    </citation>
    <scope>NUCLEOTIDE SEQUENCE [LARGE SCALE MRNA]</scope>
    <source>
        <strain>C57BL/6J</strain>
        <tissue>Lung</tissue>
    </source>
</reference>
<reference key="7">
    <citation type="journal article" date="2010" name="Cell">
        <title>A tissue-specific atlas of mouse protein phosphorylation and expression.</title>
        <authorList>
            <person name="Huttlin E.L."/>
            <person name="Jedrychowski M.P."/>
            <person name="Elias J.E."/>
            <person name="Goswami T."/>
            <person name="Rad R."/>
            <person name="Beausoleil S.A."/>
            <person name="Villen J."/>
            <person name="Haas W."/>
            <person name="Sowa M.E."/>
            <person name="Gygi S.P."/>
        </authorList>
    </citation>
    <scope>IDENTIFICATION BY MASS SPECTROMETRY [LARGE SCALE ANALYSIS]</scope>
    <source>
        <tissue>Brain</tissue>
        <tissue>Brown adipose tissue</tissue>
        <tissue>Heart</tissue>
        <tissue>Kidney</tissue>
        <tissue>Liver</tissue>
        <tissue>Lung</tissue>
        <tissue>Pancreas</tissue>
        <tissue>Spleen</tissue>
        <tissue>Testis</tissue>
    </source>
</reference>
<dbReference type="EMBL" id="AF109160">
    <property type="protein sequence ID" value="AAF14226.1"/>
    <property type="molecule type" value="mRNA"/>
</dbReference>
<dbReference type="EMBL" id="AF346663">
    <property type="protein sequence ID" value="AAK83237.1"/>
    <property type="molecule type" value="mRNA"/>
</dbReference>
<dbReference type="EMBL" id="AB035511">
    <property type="protein sequence ID" value="BAB16053.1"/>
    <property type="molecule type" value="mRNA"/>
</dbReference>
<dbReference type="EMBL" id="AF221507">
    <property type="protein sequence ID" value="AAF34657.1"/>
    <property type="molecule type" value="mRNA"/>
</dbReference>
<dbReference type="EMBL" id="AF246667">
    <property type="protein sequence ID" value="AAF61742.1"/>
    <property type="molecule type" value="Genomic_DNA"/>
</dbReference>
<dbReference type="EMBL" id="AK075704">
    <property type="protein sequence ID" value="BAC35900.1"/>
    <property type="molecule type" value="mRNA"/>
</dbReference>
<dbReference type="CCDS" id="CCDS39803.1"/>
<dbReference type="RefSeq" id="NP_065232.1">
    <property type="nucleotide sequence ID" value="NM_020486.2"/>
</dbReference>
<dbReference type="SMR" id="Q9R069"/>
<dbReference type="BioGRID" id="208246">
    <property type="interactions" value="1"/>
</dbReference>
<dbReference type="FunCoup" id="Q9R069">
    <property type="interactions" value="365"/>
</dbReference>
<dbReference type="STRING" id="10090.ENSMUSP00000003061"/>
<dbReference type="GlyCosmos" id="Q9R069">
    <property type="glycosylation" value="4 sites, 5 glycans"/>
</dbReference>
<dbReference type="GlyGen" id="Q9R069">
    <property type="glycosylation" value="4 sites, 2 N-linked glycans (2 sites)"/>
</dbReference>
<dbReference type="iPTMnet" id="Q9R069"/>
<dbReference type="PhosphoSitePlus" id="Q9R069"/>
<dbReference type="SwissPalm" id="Q9R069"/>
<dbReference type="jPOST" id="Q9R069"/>
<dbReference type="PaxDb" id="10090-ENSMUSP00000003061"/>
<dbReference type="ProteomicsDB" id="273733"/>
<dbReference type="Antibodypedia" id="17750">
    <property type="antibodies" value="436 antibodies from 36 providers"/>
</dbReference>
<dbReference type="DNASU" id="57278"/>
<dbReference type="Ensembl" id="ENSMUST00000003061.14">
    <property type="protein sequence ID" value="ENSMUSP00000003061.8"/>
    <property type="gene ID" value="ENSMUSG00000002980.15"/>
</dbReference>
<dbReference type="GeneID" id="57278"/>
<dbReference type="KEGG" id="mmu:57278"/>
<dbReference type="UCSC" id="uc009fnf.1">
    <property type="organism name" value="mouse"/>
</dbReference>
<dbReference type="AGR" id="MGI:1929940"/>
<dbReference type="CTD" id="4059"/>
<dbReference type="MGI" id="MGI:1929940">
    <property type="gene designation" value="Bcam"/>
</dbReference>
<dbReference type="VEuPathDB" id="HostDB:ENSMUSG00000002980"/>
<dbReference type="eggNOG" id="ENOG502QWC8">
    <property type="taxonomic scope" value="Eukaryota"/>
</dbReference>
<dbReference type="GeneTree" id="ENSGT00940000161038"/>
<dbReference type="HOGENOM" id="CLU_028888_1_0_1"/>
<dbReference type="InParanoid" id="Q9R069"/>
<dbReference type="OMA" id="GYMTIRT"/>
<dbReference type="OrthoDB" id="10010939at2759"/>
<dbReference type="PhylomeDB" id="Q9R069"/>
<dbReference type="TreeFam" id="TF330534"/>
<dbReference type="BioGRID-ORCS" id="57278">
    <property type="hits" value="5 hits in 77 CRISPR screens"/>
</dbReference>
<dbReference type="ChiTaRS" id="Bcam">
    <property type="organism name" value="mouse"/>
</dbReference>
<dbReference type="PRO" id="PR:Q9R069"/>
<dbReference type="Proteomes" id="UP000000589">
    <property type="component" value="Chromosome 7"/>
</dbReference>
<dbReference type="RNAct" id="Q9R069">
    <property type="molecule type" value="protein"/>
</dbReference>
<dbReference type="Bgee" id="ENSMUSG00000002980">
    <property type="expression patterns" value="Expressed in interventricular septum and 137 other cell types or tissues"/>
</dbReference>
<dbReference type="ExpressionAtlas" id="Q9R069">
    <property type="expression patterns" value="baseline and differential"/>
</dbReference>
<dbReference type="GO" id="GO:0009986">
    <property type="term" value="C:cell surface"/>
    <property type="evidence" value="ECO:0000314"/>
    <property type="project" value="MGI"/>
</dbReference>
<dbReference type="GO" id="GO:0005886">
    <property type="term" value="C:plasma membrane"/>
    <property type="evidence" value="ECO:0000314"/>
    <property type="project" value="MGI"/>
</dbReference>
<dbReference type="GO" id="GO:0043236">
    <property type="term" value="F:laminin binding"/>
    <property type="evidence" value="ECO:0007669"/>
    <property type="project" value="Ensembl"/>
</dbReference>
<dbReference type="GO" id="GO:0005055">
    <property type="term" value="F:laminin receptor activity"/>
    <property type="evidence" value="ECO:0000314"/>
    <property type="project" value="MGI"/>
</dbReference>
<dbReference type="GO" id="GO:0007155">
    <property type="term" value="P:cell adhesion"/>
    <property type="evidence" value="ECO:0000314"/>
    <property type="project" value="MGI"/>
</dbReference>
<dbReference type="GO" id="GO:0007160">
    <property type="term" value="P:cell-matrix adhesion"/>
    <property type="evidence" value="ECO:0007669"/>
    <property type="project" value="Ensembl"/>
</dbReference>
<dbReference type="CDD" id="cd00096">
    <property type="entry name" value="Ig"/>
    <property type="match status" value="2"/>
</dbReference>
<dbReference type="FunFam" id="2.60.40.10:FF:001535">
    <property type="entry name" value="Basal cell adhesion molecule"/>
    <property type="match status" value="1"/>
</dbReference>
<dbReference type="FunFam" id="2.60.40.10:FF:001800">
    <property type="entry name" value="Basal cell adhesion molecule"/>
    <property type="match status" value="1"/>
</dbReference>
<dbReference type="Gene3D" id="2.60.40.10">
    <property type="entry name" value="Immunoglobulins"/>
    <property type="match status" value="5"/>
</dbReference>
<dbReference type="InterPro" id="IPR013162">
    <property type="entry name" value="CD80_C2-set"/>
</dbReference>
<dbReference type="InterPro" id="IPR007110">
    <property type="entry name" value="Ig-like_dom"/>
</dbReference>
<dbReference type="InterPro" id="IPR036179">
    <property type="entry name" value="Ig-like_dom_sf"/>
</dbReference>
<dbReference type="InterPro" id="IPR013783">
    <property type="entry name" value="Ig-like_fold"/>
</dbReference>
<dbReference type="InterPro" id="IPR003599">
    <property type="entry name" value="Ig_sub"/>
</dbReference>
<dbReference type="InterPro" id="IPR003598">
    <property type="entry name" value="Ig_sub2"/>
</dbReference>
<dbReference type="InterPro" id="IPR051116">
    <property type="entry name" value="Surface_Rcpt/Adhesion_Mol"/>
</dbReference>
<dbReference type="PANTHER" id="PTHR11973:SF17">
    <property type="entry name" value="BASAL CELL ADHESION MOLECULE"/>
    <property type="match status" value="1"/>
</dbReference>
<dbReference type="PANTHER" id="PTHR11973">
    <property type="entry name" value="CELL SURFACE GLYCOPROTEIN MUC18-RELATED"/>
    <property type="match status" value="1"/>
</dbReference>
<dbReference type="Pfam" id="PF08205">
    <property type="entry name" value="C2-set_2"/>
    <property type="match status" value="1"/>
</dbReference>
<dbReference type="Pfam" id="PF13895">
    <property type="entry name" value="Ig_2"/>
    <property type="match status" value="1"/>
</dbReference>
<dbReference type="Pfam" id="PF13927">
    <property type="entry name" value="Ig_3"/>
    <property type="match status" value="2"/>
</dbReference>
<dbReference type="SMART" id="SM00409">
    <property type="entry name" value="IG"/>
    <property type="match status" value="5"/>
</dbReference>
<dbReference type="SMART" id="SM00408">
    <property type="entry name" value="IGc2"/>
    <property type="match status" value="3"/>
</dbReference>
<dbReference type="SUPFAM" id="SSF48726">
    <property type="entry name" value="Immunoglobulin"/>
    <property type="match status" value="5"/>
</dbReference>
<dbReference type="PROSITE" id="PS50835">
    <property type="entry name" value="IG_LIKE"/>
    <property type="match status" value="5"/>
</dbReference>
<feature type="signal peptide" evidence="2">
    <location>
        <begin position="1"/>
        <end position="25"/>
    </location>
</feature>
<feature type="chain" id="PRO_0000383338" description="Basal cell adhesion molecule">
    <location>
        <begin position="26"/>
        <end position="622"/>
    </location>
</feature>
<feature type="topological domain" description="Extracellular" evidence="2">
    <location>
        <begin position="26"/>
        <end position="541"/>
    </location>
</feature>
<feature type="transmembrane region" description="Helical" evidence="2">
    <location>
        <begin position="542"/>
        <end position="562"/>
    </location>
</feature>
<feature type="topological domain" description="Cytoplasmic" evidence="2">
    <location>
        <begin position="563"/>
        <end position="622"/>
    </location>
</feature>
<feature type="domain" description="Ig-like V-type 1">
    <location>
        <begin position="26"/>
        <end position="135"/>
    </location>
</feature>
<feature type="domain" description="Ig-like V-type 2">
    <location>
        <begin position="140"/>
        <end position="250"/>
    </location>
</feature>
<feature type="domain" description="Ig-like C2-type 1">
    <location>
        <begin position="267"/>
        <end position="342"/>
    </location>
</feature>
<feature type="domain" description="Ig-like C2-type 2">
    <location>
        <begin position="356"/>
        <end position="435"/>
    </location>
</feature>
<feature type="domain" description="Ig-like C2-type 3">
    <location>
        <begin position="442"/>
        <end position="532"/>
    </location>
</feature>
<feature type="region of interest" description="Disordered" evidence="4">
    <location>
        <begin position="574"/>
        <end position="622"/>
    </location>
</feature>
<feature type="compositionally biased region" description="Basic and acidic residues" evidence="4">
    <location>
        <begin position="575"/>
        <end position="599"/>
    </location>
</feature>
<feature type="compositionally biased region" description="Gly residues" evidence="4">
    <location>
        <begin position="603"/>
        <end position="622"/>
    </location>
</feature>
<feature type="modified residue" description="Phosphoserine" evidence="1">
    <location>
        <position position="590"/>
    </location>
</feature>
<feature type="modified residue" description="Phosphoserine" evidence="1">
    <location>
        <position position="592"/>
    </location>
</feature>
<feature type="modified residue" description="Phosphoserine" evidence="1">
    <location>
        <position position="594"/>
    </location>
</feature>
<feature type="modified residue" description="Phosphoserine" evidence="1">
    <location>
        <position position="615"/>
    </location>
</feature>
<feature type="glycosylation site" description="N-linked (GlcNAc...) asparagine" evidence="2">
    <location>
        <position position="314"/>
    </location>
</feature>
<feature type="glycosylation site" description="N-linked (GlcNAc...) asparagine" evidence="2">
    <location>
        <position position="323"/>
    </location>
</feature>
<feature type="glycosylation site" description="N-linked (GlcNAc...) asparagine" evidence="2">
    <location>
        <position position="370"/>
    </location>
</feature>
<feature type="glycosylation site" description="N-linked (GlcNAc...) asparagine" evidence="2">
    <location>
        <position position="377"/>
    </location>
</feature>
<feature type="disulfide bond" evidence="3">
    <location>
        <begin position="47"/>
        <end position="118"/>
    </location>
</feature>
<feature type="disulfide bond" evidence="3">
    <location>
        <begin position="165"/>
        <end position="230"/>
    </location>
</feature>
<feature type="disulfide bond" evidence="3">
    <location>
        <begin position="284"/>
        <end position="330"/>
    </location>
</feature>
<feature type="disulfide bond" evidence="3">
    <location>
        <begin position="378"/>
        <end position="418"/>
    </location>
</feature>
<feature type="disulfide bond" evidence="3">
    <location>
        <begin position="467"/>
        <end position="516"/>
    </location>
</feature>
<feature type="sequence conflict" description="In Ref. 5; AAF61742." evidence="5" ref="5">
    <original>N</original>
    <variation>D</variation>
    <location>
        <position position="227"/>
    </location>
</feature>
<feature type="sequence conflict" description="In Ref. 3; BAB16053 and 5; AAF61742." evidence="5" ref="3 5">
    <original>R</original>
    <variation>G</variation>
    <location>
        <position position="319"/>
    </location>
</feature>
<feature type="sequence conflict" description="In Ref. 5; AAF61742." evidence="5" ref="5">
    <original>V</original>
    <variation>A</variation>
    <location>
        <position position="361"/>
    </location>
</feature>
<feature type="sequence conflict" description="In Ref. 3; BAB16053." evidence="5" ref="3">
    <original>V</original>
    <variation>A</variation>
    <location>
        <position position="388"/>
    </location>
</feature>
<keyword id="KW-0130">Cell adhesion</keyword>
<keyword id="KW-1003">Cell membrane</keyword>
<keyword id="KW-1015">Disulfide bond</keyword>
<keyword id="KW-0325">Glycoprotein</keyword>
<keyword id="KW-0393">Immunoglobulin domain</keyword>
<keyword id="KW-0472">Membrane</keyword>
<keyword id="KW-0597">Phosphoprotein</keyword>
<keyword id="KW-0675">Receptor</keyword>
<keyword id="KW-1185">Reference proteome</keyword>
<keyword id="KW-0677">Repeat</keyword>
<keyword id="KW-0732">Signal</keyword>
<keyword id="KW-0812">Transmembrane</keyword>
<keyword id="KW-1133">Transmembrane helix</keyword>
<sequence>MEPPDARAGLLWLTFLLSGYSGAQAELHVSVPPRVEVMRGEQVALDCTPREHPEHYVLEWFLVDGTGARHRLASVEPQGSEFLGTVHSLGRVPPYEVDSRGRLVIAKVQVGDGRDYVCVVKAGAAGTSEATSSVRVFATPEDTEVSPNKGTLSVMDQFAQEIATCSSNNGNPVPRITWYRNGQRLEVPMEVNQKGYITIRTVREASGLYSLTSTLYLRLHKDDRDANFHCAAHYDLPSGQHGRLDSHTFRLTLHYPTEHVEFWVGSPSTTEGWVREGDAVQLLCQGDGSPSPEYSFFRQQGTQEEQLNVNLKGNLTLERVHRNQSGIYGCRVEDYDADEEVQLVKKLKLHVAYLDPLELSVPEELFVFLNSSSTVVNCSARGLPTPTVRWTKDSVTLADGPMLSLQSVTFDSAGTYTCEASTPTVPLLSRTQSFQLIVQGAPELKPNEIMPKSGNSWTEGDEVMLTCSARGFPEPKLTWSQRGDTPAEPPFEGRGWKSSSLMVKVTSALSREGVSCEASNIHGKKGHVFHFGSVAPQTAQAGVAVMAVAVSVGLLLLVVAAFYCMRRKGRPGCCRRAEKGAPPAREPELSHSGSERPEHTGLLMGGPSGGGRGGSGGFGDEC</sequence>